<dbReference type="EMBL" id="AX007052">
    <property type="status" value="NOT_ANNOTATED_CDS"/>
    <property type="molecule type" value="Genomic_DNA"/>
</dbReference>
<dbReference type="GlyCosmos" id="P0CAT4">
    <property type="glycosylation" value="2 sites, No reported glycans"/>
</dbReference>
<dbReference type="VEuPathDB" id="MicrosporidiaDB:Eint_060140"/>
<dbReference type="GO" id="GO:0044099">
    <property type="term" value="C:polar tube"/>
    <property type="evidence" value="ECO:0007669"/>
    <property type="project" value="UniProtKB-SubCell"/>
</dbReference>
<dbReference type="GO" id="GO:0030435">
    <property type="term" value="P:sporulation resulting in formation of a cellular spore"/>
    <property type="evidence" value="ECO:0007669"/>
    <property type="project" value="UniProtKB-KW"/>
</dbReference>
<dbReference type="InterPro" id="IPR031507">
    <property type="entry name" value="PTP2"/>
</dbReference>
<dbReference type="Pfam" id="PF17022">
    <property type="entry name" value="PTP2"/>
    <property type="match status" value="1"/>
</dbReference>
<accession>P0CAT4</accession>
<gene>
    <name type="primary">PTP2</name>
</gene>
<sequence>MLLLLSAVAFVSATAVQSGVVSQPTTPIPILPGQPMGGMANGCTNKKLDGVEIMRRNMVECQKRNAEATKAMVERANEKAVETFNKEVSKGPQKESGQCIEKAVQGTDRCILAGIIDKAVNKRKYRISDVENSTSLYRGDKLIALIVNVDYGLQPIIKPKKKKSKIMANLPQPKREMYFNQIGQLVGAKGTFPQDNKDECKPCEPKKTVETASERCNLGCELKGTSALISKAIQKKEIKESPKEGDRNTTQEYDGEGSAEDAEGQQPSADGEGLE</sequence>
<feature type="signal peptide" evidence="2">
    <location>
        <begin position="1"/>
        <end position="18"/>
    </location>
</feature>
<feature type="chain" id="PRO_0000377526" description="Polar tube protein 2">
    <location>
        <begin position="19"/>
        <end position="275"/>
    </location>
</feature>
<feature type="region of interest" description="Disordered" evidence="3">
    <location>
        <begin position="233"/>
        <end position="275"/>
    </location>
</feature>
<feature type="compositionally biased region" description="Basic and acidic residues" evidence="3">
    <location>
        <begin position="234"/>
        <end position="249"/>
    </location>
</feature>
<feature type="compositionally biased region" description="Acidic residues" evidence="3">
    <location>
        <begin position="253"/>
        <end position="263"/>
    </location>
</feature>
<feature type="glycosylation site" description="N-linked (GlcNAc...) asparagine" evidence="2">
    <location>
        <position position="132"/>
    </location>
</feature>
<feature type="glycosylation site" description="N-linked (GlcNAc...) asparagine" evidence="2">
    <location>
        <position position="248"/>
    </location>
</feature>
<protein>
    <recommendedName>
        <fullName>Polar tube protein 2</fullName>
    </recommendedName>
</protein>
<keyword id="KW-0325">Glycoprotein</keyword>
<keyword id="KW-0732">Signal</keyword>
<keyword id="KW-0749">Sporulation</keyword>
<reference key="1">
    <citation type="journal article" date="2001" name="Infect. Immun.">
        <title>Microsporidian invasion apparatus: identification of a novel polar tube protein and evidence for clustering of ptp1 and ptp2 genes in three Encephalitozoon species.</title>
        <authorList>
            <person name="Delbac F."/>
            <person name="Peuvel I."/>
            <person name="Metenier G."/>
            <person name="Peyretaillade E."/>
            <person name="Vivares C.P."/>
        </authorList>
    </citation>
    <scope>NUCLEOTIDE SEQUENCE [GENOMIC DNA]</scope>
</reference>
<reference key="2">
    <citation type="patent" date="2000-01-13" number="WO0001724">
        <title>Microsporidium polar tube proteins, nucleic acids coding for said proteins and their uses.</title>
        <authorList>
            <person name="Vivares C.P."/>
            <person name="Danchin A."/>
            <person name="Delbac F."/>
        </authorList>
    </citation>
    <scope>NUCLEOTIDE SEQUENCE [GENOMIC DNA]</scope>
</reference>
<proteinExistence type="inferred from homology"/>
<comment type="function">
    <text evidence="1">Involved in formation of a polar tube through which the infectious agent is passed on to the host cell.</text>
</comment>
<comment type="subcellular location">
    <subcellularLocation>
        <location evidence="1">Spore polar tube</location>
    </subcellularLocation>
</comment>
<organism>
    <name type="scientific">Encephalitozoon intestinalis</name>
    <name type="common">Microsporidian parasite</name>
    <dbReference type="NCBI Taxonomy" id="58839"/>
    <lineage>
        <taxon>Eukaryota</taxon>
        <taxon>Fungi</taxon>
        <taxon>Fungi incertae sedis</taxon>
        <taxon>Microsporidia</taxon>
        <taxon>Unikaryonidae</taxon>
        <taxon>Encephalitozoon</taxon>
    </lineage>
</organism>
<evidence type="ECO:0000250" key="1"/>
<evidence type="ECO:0000255" key="2"/>
<evidence type="ECO:0000256" key="3">
    <source>
        <dbReference type="SAM" id="MobiDB-lite"/>
    </source>
</evidence>
<name>PTP2_ENCIN</name>